<protein>
    <recommendedName>
        <fullName evidence="4">NAD(P)H oxidoreductase RTN4IP1, mitochondrial</fullName>
        <ecNumber evidence="1">1.6.5.2</ecNumber>
    </recommendedName>
    <alternativeName>
        <fullName>Reticulon-4-interacting protein 1 homolog</fullName>
    </alternativeName>
</protein>
<gene>
    <name type="primary">rtn4ip1</name>
    <name type="ORF">DDB_G0288729</name>
</gene>
<feature type="transit peptide" description="Mitochondrion" evidence="3">
    <location>
        <begin position="1"/>
        <end status="unknown"/>
    </location>
</feature>
<feature type="chain" id="PRO_0000327932" description="NAD(P)H oxidoreductase RTN4IP1, mitochondrial">
    <location>
        <begin status="unknown"/>
        <end position="352"/>
    </location>
</feature>
<feature type="domain" description="Enoyl reductase (ER)" evidence="3">
    <location>
        <begin position="11"/>
        <end position="348"/>
    </location>
</feature>
<feature type="binding site" evidence="1">
    <location>
        <position position="165"/>
    </location>
    <ligand>
        <name>NADPH</name>
        <dbReference type="ChEBI" id="CHEBI:57783"/>
    </ligand>
</feature>
<feature type="binding site" evidence="1">
    <location>
        <position position="206"/>
    </location>
    <ligand>
        <name>NADPH</name>
        <dbReference type="ChEBI" id="CHEBI:57783"/>
    </ligand>
</feature>
<feature type="binding site" evidence="1">
    <location>
        <position position="296"/>
    </location>
    <ligand>
        <name>NADPH</name>
        <dbReference type="ChEBI" id="CHEBI:57783"/>
    </ligand>
</feature>
<feature type="binding site" evidence="1">
    <location>
        <position position="298"/>
    </location>
    <ligand>
        <name>NADPH</name>
        <dbReference type="ChEBI" id="CHEBI:57783"/>
    </ligand>
</feature>
<reference key="1">
    <citation type="journal article" date="2005" name="Nature">
        <title>The genome of the social amoeba Dictyostelium discoideum.</title>
        <authorList>
            <person name="Eichinger L."/>
            <person name="Pachebat J.A."/>
            <person name="Gloeckner G."/>
            <person name="Rajandream M.A."/>
            <person name="Sucgang R."/>
            <person name="Berriman M."/>
            <person name="Song J."/>
            <person name="Olsen R."/>
            <person name="Szafranski K."/>
            <person name="Xu Q."/>
            <person name="Tunggal B."/>
            <person name="Kummerfeld S."/>
            <person name="Madera M."/>
            <person name="Konfortov B.A."/>
            <person name="Rivero F."/>
            <person name="Bankier A.T."/>
            <person name="Lehmann R."/>
            <person name="Hamlin N."/>
            <person name="Davies R."/>
            <person name="Gaudet P."/>
            <person name="Fey P."/>
            <person name="Pilcher K."/>
            <person name="Chen G."/>
            <person name="Saunders D."/>
            <person name="Sodergren E.J."/>
            <person name="Davis P."/>
            <person name="Kerhornou A."/>
            <person name="Nie X."/>
            <person name="Hall N."/>
            <person name="Anjard C."/>
            <person name="Hemphill L."/>
            <person name="Bason N."/>
            <person name="Farbrother P."/>
            <person name="Desany B."/>
            <person name="Just E."/>
            <person name="Morio T."/>
            <person name="Rost R."/>
            <person name="Churcher C.M."/>
            <person name="Cooper J."/>
            <person name="Haydock S."/>
            <person name="van Driessche N."/>
            <person name="Cronin A."/>
            <person name="Goodhead I."/>
            <person name="Muzny D.M."/>
            <person name="Mourier T."/>
            <person name="Pain A."/>
            <person name="Lu M."/>
            <person name="Harper D."/>
            <person name="Lindsay R."/>
            <person name="Hauser H."/>
            <person name="James K.D."/>
            <person name="Quiles M."/>
            <person name="Madan Babu M."/>
            <person name="Saito T."/>
            <person name="Buchrieser C."/>
            <person name="Wardroper A."/>
            <person name="Felder M."/>
            <person name="Thangavelu M."/>
            <person name="Johnson D."/>
            <person name="Knights A."/>
            <person name="Loulseged H."/>
            <person name="Mungall K.L."/>
            <person name="Oliver K."/>
            <person name="Price C."/>
            <person name="Quail M.A."/>
            <person name="Urushihara H."/>
            <person name="Hernandez J."/>
            <person name="Rabbinowitsch E."/>
            <person name="Steffen D."/>
            <person name="Sanders M."/>
            <person name="Ma J."/>
            <person name="Kohara Y."/>
            <person name="Sharp S."/>
            <person name="Simmonds M.N."/>
            <person name="Spiegler S."/>
            <person name="Tivey A."/>
            <person name="Sugano S."/>
            <person name="White B."/>
            <person name="Walker D."/>
            <person name="Woodward J.R."/>
            <person name="Winckler T."/>
            <person name="Tanaka Y."/>
            <person name="Shaulsky G."/>
            <person name="Schleicher M."/>
            <person name="Weinstock G.M."/>
            <person name="Rosenthal A."/>
            <person name="Cox E.C."/>
            <person name="Chisholm R.L."/>
            <person name="Gibbs R.A."/>
            <person name="Loomis W.F."/>
            <person name="Platzer M."/>
            <person name="Kay R.R."/>
            <person name="Williams J.G."/>
            <person name="Dear P.H."/>
            <person name="Noegel A.A."/>
            <person name="Barrell B.G."/>
            <person name="Kuspa A."/>
        </authorList>
    </citation>
    <scope>NUCLEOTIDE SEQUENCE [LARGE SCALE GENOMIC DNA]</scope>
    <source>
        <strain>AX4</strain>
    </source>
</reference>
<comment type="function">
    <text evidence="1 2">NAD(P)H oxidoreductase involved in the ubiquinone biosynthetic pathway (By similarity). Required for the O-methyltransferase activity of coq3 (By similarity).</text>
</comment>
<comment type="catalytic activity">
    <reaction evidence="1">
        <text>a quinone + NADH + H(+) = a quinol + NAD(+)</text>
        <dbReference type="Rhea" id="RHEA:46160"/>
        <dbReference type="ChEBI" id="CHEBI:15378"/>
        <dbReference type="ChEBI" id="CHEBI:24646"/>
        <dbReference type="ChEBI" id="CHEBI:57540"/>
        <dbReference type="ChEBI" id="CHEBI:57945"/>
        <dbReference type="ChEBI" id="CHEBI:132124"/>
        <dbReference type="EC" id="1.6.5.2"/>
    </reaction>
</comment>
<comment type="catalytic activity">
    <reaction evidence="1">
        <text>a quinone + NADPH + H(+) = a quinol + NADP(+)</text>
        <dbReference type="Rhea" id="RHEA:46164"/>
        <dbReference type="ChEBI" id="CHEBI:15378"/>
        <dbReference type="ChEBI" id="CHEBI:24646"/>
        <dbReference type="ChEBI" id="CHEBI:57783"/>
        <dbReference type="ChEBI" id="CHEBI:58349"/>
        <dbReference type="ChEBI" id="CHEBI:132124"/>
        <dbReference type="EC" id="1.6.5.2"/>
    </reaction>
</comment>
<comment type="pathway">
    <text evidence="1">Cofactor biosynthesis; ubiquinone biosynthesis.</text>
</comment>
<comment type="subcellular location">
    <subcellularLocation>
        <location evidence="2">Mitochondrion matrix</location>
    </subcellularLocation>
</comment>
<comment type="similarity">
    <text evidence="4">Belongs to the zinc-containing alcohol dehydrogenase family. Quinone oxidoreductase subfamily.</text>
</comment>
<keyword id="KW-0496">Mitochondrion</keyword>
<keyword id="KW-0521">NADP</keyword>
<keyword id="KW-0547">Nucleotide-binding</keyword>
<keyword id="KW-0560">Oxidoreductase</keyword>
<keyword id="KW-1185">Reference proteome</keyword>
<keyword id="KW-0809">Transit peptide</keyword>
<keyword id="KW-0831">Ubiquinone biosynthesis</keyword>
<sequence>MKGILLNGYGESLDLLEYKTDLPVPKPIKSQVLIKIHSTSINPLDNVMRKGYASSIVDLKLKLPIILGRECSGEIVEIGDSVWDYEIGDQVWSASPPFSMGSHCEYITVDESEISLKPKNLTHQQSASIPFASLTAWNAIYNVLPTNKKITTNTKILVNGGNGSVGFFILQLLKKHLNVNQVSTTCNIKHFEKLKKLTLVNETIDYNNLKINDNDNNKFDLIFNCYDGGKNQNENEKKCIDALKDGGNLIGFNGPLVKFSDKDGVLSGLPMGMMNQLNSSERIKKQYSKNVHLDYAIFSPSGSTLKQISKLYENNILIPNIDKQFNLNQIKDAYTCFENSNSNGKIIINNKF</sequence>
<proteinExistence type="inferred from homology"/>
<organism>
    <name type="scientific">Dictyostelium discoideum</name>
    <name type="common">Social amoeba</name>
    <dbReference type="NCBI Taxonomy" id="44689"/>
    <lineage>
        <taxon>Eukaryota</taxon>
        <taxon>Amoebozoa</taxon>
        <taxon>Evosea</taxon>
        <taxon>Eumycetozoa</taxon>
        <taxon>Dictyostelia</taxon>
        <taxon>Dictyosteliales</taxon>
        <taxon>Dictyosteliaceae</taxon>
        <taxon>Dictyostelium</taxon>
    </lineage>
</organism>
<evidence type="ECO:0000250" key="1">
    <source>
        <dbReference type="UniProtKB" id="Q8WWV3"/>
    </source>
</evidence>
<evidence type="ECO:0000250" key="2">
    <source>
        <dbReference type="UniProtKB" id="Q924D0"/>
    </source>
</evidence>
<evidence type="ECO:0000255" key="3"/>
<evidence type="ECO:0000305" key="4"/>
<accession>Q54II4</accession>
<dbReference type="EC" id="1.6.5.2" evidence="1"/>
<dbReference type="EMBL" id="AAFI02000120">
    <property type="protein sequence ID" value="EAL63096.1"/>
    <property type="molecule type" value="Genomic_DNA"/>
</dbReference>
<dbReference type="RefSeq" id="XP_636602.1">
    <property type="nucleotide sequence ID" value="XM_631510.1"/>
</dbReference>
<dbReference type="SMR" id="Q54II4"/>
<dbReference type="FunCoup" id="Q54II4">
    <property type="interactions" value="234"/>
</dbReference>
<dbReference type="STRING" id="44689.Q54II4"/>
<dbReference type="PaxDb" id="44689-DDB0266417"/>
<dbReference type="EnsemblProtists" id="EAL63096">
    <property type="protein sequence ID" value="EAL63096"/>
    <property type="gene ID" value="DDB_G0288729"/>
</dbReference>
<dbReference type="GeneID" id="8626777"/>
<dbReference type="KEGG" id="ddi:DDB_G0288729"/>
<dbReference type="dictyBase" id="DDB_G0288729"/>
<dbReference type="VEuPathDB" id="AmoebaDB:DDB_G0288729"/>
<dbReference type="eggNOG" id="KOG1198">
    <property type="taxonomic scope" value="Eukaryota"/>
</dbReference>
<dbReference type="HOGENOM" id="CLU_026673_3_3_1"/>
<dbReference type="InParanoid" id="Q54II4"/>
<dbReference type="OMA" id="PVVPGWD"/>
<dbReference type="PhylomeDB" id="Q54II4"/>
<dbReference type="UniPathway" id="UPA00232"/>
<dbReference type="PRO" id="PR:Q54II4"/>
<dbReference type="Proteomes" id="UP000002195">
    <property type="component" value="Chromosome 5"/>
</dbReference>
<dbReference type="GO" id="GO:0005759">
    <property type="term" value="C:mitochondrial matrix"/>
    <property type="evidence" value="ECO:0007669"/>
    <property type="project" value="UniProtKB-SubCell"/>
</dbReference>
<dbReference type="GO" id="GO:0016491">
    <property type="term" value="F:oxidoreductase activity"/>
    <property type="evidence" value="ECO:0007669"/>
    <property type="project" value="InterPro"/>
</dbReference>
<dbReference type="CDD" id="cd08248">
    <property type="entry name" value="RTN4I1"/>
    <property type="match status" value="1"/>
</dbReference>
<dbReference type="Gene3D" id="3.90.180.10">
    <property type="entry name" value="Medium-chain alcohol dehydrogenases, catalytic domain"/>
    <property type="match status" value="1"/>
</dbReference>
<dbReference type="Gene3D" id="3.40.50.720">
    <property type="entry name" value="NAD(P)-binding Rossmann-like Domain"/>
    <property type="match status" value="1"/>
</dbReference>
<dbReference type="InterPro" id="IPR013154">
    <property type="entry name" value="ADH-like_N"/>
</dbReference>
<dbReference type="InterPro" id="IPR011032">
    <property type="entry name" value="GroES-like_sf"/>
</dbReference>
<dbReference type="InterPro" id="IPR052585">
    <property type="entry name" value="Lipid_raft_assoc_Zn_ADH"/>
</dbReference>
<dbReference type="InterPro" id="IPR036291">
    <property type="entry name" value="NAD(P)-bd_dom_sf"/>
</dbReference>
<dbReference type="InterPro" id="IPR020843">
    <property type="entry name" value="PKS_ER"/>
</dbReference>
<dbReference type="InterPro" id="IPR037397">
    <property type="entry name" value="RTN4I1"/>
</dbReference>
<dbReference type="PANTHER" id="PTHR43482">
    <property type="entry name" value="PROTEIN AST1-RELATED"/>
    <property type="match status" value="1"/>
</dbReference>
<dbReference type="PANTHER" id="PTHR43482:SF1">
    <property type="entry name" value="PROTEIN AST1-RELATED"/>
    <property type="match status" value="1"/>
</dbReference>
<dbReference type="Pfam" id="PF08240">
    <property type="entry name" value="ADH_N"/>
    <property type="match status" value="1"/>
</dbReference>
<dbReference type="Pfam" id="PF13602">
    <property type="entry name" value="ADH_zinc_N_2"/>
    <property type="match status" value="1"/>
</dbReference>
<dbReference type="SMART" id="SM00829">
    <property type="entry name" value="PKS_ER"/>
    <property type="match status" value="1"/>
</dbReference>
<dbReference type="SUPFAM" id="SSF50129">
    <property type="entry name" value="GroES-like"/>
    <property type="match status" value="1"/>
</dbReference>
<dbReference type="SUPFAM" id="SSF51735">
    <property type="entry name" value="NAD(P)-binding Rossmann-fold domains"/>
    <property type="match status" value="1"/>
</dbReference>
<name>RT4I1_DICDI</name>